<sequence length="568" mass="65583">MDYRRLLMSRVVPGQFDDADSSDSENRDLKTVKEKDDILFEDLQDNVNENGEGEIEDEEEEGYDDDDDDWDWDEGVGKLAKGYVWNGGSNPQANRQTSDSSSAKMSTPADKVLRKFENKINLDKLNVTDSVINKVTEKSRQKEADMYRIKDKADRATVEQVLDPRTRMILFKMLTRGIITEINGCISTGKEANVYHASTANGESRAIKIYKTSILVFKDRDKYVSGEFRFRHGYCKGNPRKMVKTWAEKEMRNLIRLNTAEIPCPEPIMLRSHVLVMSFIGKDDMPAPLLKNVQLSESKARELYLQVIQYMRRMYQDARLVHADLSEFNMLYHGGGVYIIDVSQSVEHDHPHALEFLRKDCANVNDFFMRHSVAVMTVRELFEFVTDPSITHENMDAYLSKAMEIASQRTKEERSSQDHVDEEVFKRAYIPRTLNEVKNYERDMDIIMKLKEEDMAMNAQQDNILYQTVTGLKKDLSGVQKVPALLENQVEERTCSDSEDIGSSECSDTDSEEQGDHARPKKHTTDPDIDKKERKKMVKEAQREKRKNKIPKHVKKRKEKTAKTKKGK</sequence>
<comment type="function">
    <text evidence="1 2 4 5">Involved in the final steps of cytoplasmic maturation of the 40S ribosomal subunit. Involved in processing of 18S-E pre-rRNA to the mature 18S rRNA. Required for the recycling of NOB1 and PNO1 from the late 40S precursor (PubMed:22072790). The association with the very late 40S subunit intermediate may involve a translation-like checkpoint point cycle preceeding the binding to the 60S ribosomal subunit (By similarity). Despite the protein kinase domain is proposed to act predominantly as an ATPase (By similarity). The catalytic activity regulates its dynamic association with the 40S subunit (By similarity). In addition to its role in ribosomal biogenesis acts as an adapter protein by recruiting NCL/nucleolin the to PRMT5 complex for its symmetrical methylation (PubMed:21081503).</text>
</comment>
<comment type="catalytic activity">
    <reaction evidence="5">
        <text>L-seryl-[protein] + ATP = O-phospho-L-seryl-[protein] + ADP + H(+)</text>
        <dbReference type="Rhea" id="RHEA:17989"/>
        <dbReference type="Rhea" id="RHEA-COMP:9863"/>
        <dbReference type="Rhea" id="RHEA-COMP:11604"/>
        <dbReference type="ChEBI" id="CHEBI:15378"/>
        <dbReference type="ChEBI" id="CHEBI:29999"/>
        <dbReference type="ChEBI" id="CHEBI:30616"/>
        <dbReference type="ChEBI" id="CHEBI:83421"/>
        <dbReference type="ChEBI" id="CHEBI:456216"/>
        <dbReference type="EC" id="2.7.11.1"/>
    </reaction>
</comment>
<comment type="catalytic activity">
    <reaction evidence="5">
        <text>L-threonyl-[protein] + ATP = O-phospho-L-threonyl-[protein] + ADP + H(+)</text>
        <dbReference type="Rhea" id="RHEA:46608"/>
        <dbReference type="Rhea" id="RHEA-COMP:11060"/>
        <dbReference type="Rhea" id="RHEA-COMP:11605"/>
        <dbReference type="ChEBI" id="CHEBI:15378"/>
        <dbReference type="ChEBI" id="CHEBI:30013"/>
        <dbReference type="ChEBI" id="CHEBI:30616"/>
        <dbReference type="ChEBI" id="CHEBI:61977"/>
        <dbReference type="ChEBI" id="CHEBI:456216"/>
        <dbReference type="EC" id="2.7.11.1"/>
    </reaction>
</comment>
<comment type="catalytic activity">
    <reaction evidence="1">
        <text>ATP + H2O = ADP + phosphate + H(+)</text>
        <dbReference type="Rhea" id="RHEA:13065"/>
        <dbReference type="ChEBI" id="CHEBI:15377"/>
        <dbReference type="ChEBI" id="CHEBI:15378"/>
        <dbReference type="ChEBI" id="CHEBI:30616"/>
        <dbReference type="ChEBI" id="CHEBI:43474"/>
        <dbReference type="ChEBI" id="CHEBI:456216"/>
    </reaction>
</comment>
<comment type="cofactor">
    <cofactor evidence="6 7">
        <name>Mg(2+)</name>
        <dbReference type="ChEBI" id="CHEBI:18420"/>
    </cofactor>
</comment>
<comment type="subunit">
    <text evidence="4 5">Associates with the precursor of the 40S ribosome subunit. Interacts (via its N-terminus) with PRMT5 (via its N-terminus) (PubMed:21081503, PubMed:22072790). Interacts with WDR77 (PubMed:22072790). Found in a PRMT5 complex composed of PRMT5, WDR77 and RIOK1 (PubMed:21081503). Interacts (via its C-terminus) with NCL; this interaction targets NCL for PRTM5 methylation (PubMed:21081503).</text>
</comment>
<comment type="interaction">
    <interactant intactId="EBI-7307838">
        <id>Q9BRS2</id>
    </interactant>
    <interactant intactId="EBI-351098">
        <id>O14744</id>
        <label>PRMT5</label>
    </interactant>
    <organismsDiffer>false</organismsDiffer>
    <experiments>6</experiments>
</comment>
<comment type="subcellular location">
    <subcellularLocation>
        <location evidence="4">Cytoplasm</location>
        <location evidence="4">Cytosol</location>
    </subcellularLocation>
</comment>
<comment type="similarity">
    <text evidence="7">Belongs to the protein kinase superfamily. RIO-type Ser/Thr kinase family.</text>
</comment>
<reference key="1">
    <citation type="journal article" date="2004" name="Nat. Genet.">
        <title>Complete sequencing and characterization of 21,243 full-length human cDNAs.</title>
        <authorList>
            <person name="Ota T."/>
            <person name="Suzuki Y."/>
            <person name="Nishikawa T."/>
            <person name="Otsuki T."/>
            <person name="Sugiyama T."/>
            <person name="Irie R."/>
            <person name="Wakamatsu A."/>
            <person name="Hayashi K."/>
            <person name="Sato H."/>
            <person name="Nagai K."/>
            <person name="Kimura K."/>
            <person name="Makita H."/>
            <person name="Sekine M."/>
            <person name="Obayashi M."/>
            <person name="Nishi T."/>
            <person name="Shibahara T."/>
            <person name="Tanaka T."/>
            <person name="Ishii S."/>
            <person name="Yamamoto J."/>
            <person name="Saito K."/>
            <person name="Kawai Y."/>
            <person name="Isono Y."/>
            <person name="Nakamura Y."/>
            <person name="Nagahari K."/>
            <person name="Murakami K."/>
            <person name="Yasuda T."/>
            <person name="Iwayanagi T."/>
            <person name="Wagatsuma M."/>
            <person name="Shiratori A."/>
            <person name="Sudo H."/>
            <person name="Hosoiri T."/>
            <person name="Kaku Y."/>
            <person name="Kodaira H."/>
            <person name="Kondo H."/>
            <person name="Sugawara M."/>
            <person name="Takahashi M."/>
            <person name="Kanda K."/>
            <person name="Yokoi T."/>
            <person name="Furuya T."/>
            <person name="Kikkawa E."/>
            <person name="Omura Y."/>
            <person name="Abe K."/>
            <person name="Kamihara K."/>
            <person name="Katsuta N."/>
            <person name="Sato K."/>
            <person name="Tanikawa M."/>
            <person name="Yamazaki M."/>
            <person name="Ninomiya K."/>
            <person name="Ishibashi T."/>
            <person name="Yamashita H."/>
            <person name="Murakawa K."/>
            <person name="Fujimori K."/>
            <person name="Tanai H."/>
            <person name="Kimata M."/>
            <person name="Watanabe M."/>
            <person name="Hiraoka S."/>
            <person name="Chiba Y."/>
            <person name="Ishida S."/>
            <person name="Ono Y."/>
            <person name="Takiguchi S."/>
            <person name="Watanabe S."/>
            <person name="Yosida M."/>
            <person name="Hotuta T."/>
            <person name="Kusano J."/>
            <person name="Kanehori K."/>
            <person name="Takahashi-Fujii A."/>
            <person name="Hara H."/>
            <person name="Tanase T.-O."/>
            <person name="Nomura Y."/>
            <person name="Togiya S."/>
            <person name="Komai F."/>
            <person name="Hara R."/>
            <person name="Takeuchi K."/>
            <person name="Arita M."/>
            <person name="Imose N."/>
            <person name="Musashino K."/>
            <person name="Yuuki H."/>
            <person name="Oshima A."/>
            <person name="Sasaki N."/>
            <person name="Aotsuka S."/>
            <person name="Yoshikawa Y."/>
            <person name="Matsunawa H."/>
            <person name="Ichihara T."/>
            <person name="Shiohata N."/>
            <person name="Sano S."/>
            <person name="Moriya S."/>
            <person name="Momiyama H."/>
            <person name="Satoh N."/>
            <person name="Takami S."/>
            <person name="Terashima Y."/>
            <person name="Suzuki O."/>
            <person name="Nakagawa S."/>
            <person name="Senoh A."/>
            <person name="Mizoguchi H."/>
            <person name="Goto Y."/>
            <person name="Shimizu F."/>
            <person name="Wakebe H."/>
            <person name="Hishigaki H."/>
            <person name="Watanabe T."/>
            <person name="Sugiyama A."/>
            <person name="Takemoto M."/>
            <person name="Kawakami B."/>
            <person name="Yamazaki M."/>
            <person name="Watanabe K."/>
            <person name="Kumagai A."/>
            <person name="Itakura S."/>
            <person name="Fukuzumi Y."/>
            <person name="Fujimori Y."/>
            <person name="Komiyama M."/>
            <person name="Tashiro H."/>
            <person name="Tanigami A."/>
            <person name="Fujiwara T."/>
            <person name="Ono T."/>
            <person name="Yamada K."/>
            <person name="Fujii Y."/>
            <person name="Ozaki K."/>
            <person name="Hirao M."/>
            <person name="Ohmori Y."/>
            <person name="Kawabata A."/>
            <person name="Hikiji T."/>
            <person name="Kobatake N."/>
            <person name="Inagaki H."/>
            <person name="Ikema Y."/>
            <person name="Okamoto S."/>
            <person name="Okitani R."/>
            <person name="Kawakami T."/>
            <person name="Noguchi S."/>
            <person name="Itoh T."/>
            <person name="Shigeta K."/>
            <person name="Senba T."/>
            <person name="Matsumura K."/>
            <person name="Nakajima Y."/>
            <person name="Mizuno T."/>
            <person name="Morinaga M."/>
            <person name="Sasaki M."/>
            <person name="Togashi T."/>
            <person name="Oyama M."/>
            <person name="Hata H."/>
            <person name="Watanabe M."/>
            <person name="Komatsu T."/>
            <person name="Mizushima-Sugano J."/>
            <person name="Satoh T."/>
            <person name="Shirai Y."/>
            <person name="Takahashi Y."/>
            <person name="Nakagawa K."/>
            <person name="Okumura K."/>
            <person name="Nagase T."/>
            <person name="Nomura N."/>
            <person name="Kikuchi H."/>
            <person name="Masuho Y."/>
            <person name="Yamashita R."/>
            <person name="Nakai K."/>
            <person name="Yada T."/>
            <person name="Nakamura Y."/>
            <person name="Ohara O."/>
            <person name="Isogai T."/>
            <person name="Sugano S."/>
        </authorList>
    </citation>
    <scope>NUCLEOTIDE SEQUENCE [LARGE SCALE MRNA]</scope>
</reference>
<reference key="2">
    <citation type="submission" date="2005-07" db="EMBL/GenBank/DDBJ databases">
        <authorList>
            <person name="Mural R.J."/>
            <person name="Istrail S."/>
            <person name="Sutton G.G."/>
            <person name="Florea L."/>
            <person name="Halpern A.L."/>
            <person name="Mobarry C.M."/>
            <person name="Lippert R."/>
            <person name="Walenz B."/>
            <person name="Shatkay H."/>
            <person name="Dew I."/>
            <person name="Miller J.R."/>
            <person name="Flanigan M.J."/>
            <person name="Edwards N.J."/>
            <person name="Bolanos R."/>
            <person name="Fasulo D."/>
            <person name="Halldorsson B.V."/>
            <person name="Hannenhalli S."/>
            <person name="Turner R."/>
            <person name="Yooseph S."/>
            <person name="Lu F."/>
            <person name="Nusskern D.R."/>
            <person name="Shue B.C."/>
            <person name="Zheng X.H."/>
            <person name="Zhong F."/>
            <person name="Delcher A.L."/>
            <person name="Huson D.H."/>
            <person name="Kravitz S.A."/>
            <person name="Mouchard L."/>
            <person name="Reinert K."/>
            <person name="Remington K.A."/>
            <person name="Clark A.G."/>
            <person name="Waterman M.S."/>
            <person name="Eichler E.E."/>
            <person name="Adams M.D."/>
            <person name="Hunkapiller M.W."/>
            <person name="Myers E.W."/>
            <person name="Venter J.C."/>
        </authorList>
    </citation>
    <scope>NUCLEOTIDE SEQUENCE [LARGE SCALE GENOMIC DNA]</scope>
</reference>
<reference key="3">
    <citation type="journal article" date="2004" name="Genome Res.">
        <title>The status, quality, and expansion of the NIH full-length cDNA project: the Mammalian Gene Collection (MGC).</title>
        <authorList>
            <consortium name="The MGC Project Team"/>
        </authorList>
    </citation>
    <scope>NUCLEOTIDE SEQUENCE [LARGE SCALE MRNA]</scope>
    <source>
        <tissue>Lung</tissue>
    </source>
</reference>
<reference key="4">
    <citation type="journal article" date="2007" name="BMC Genomics">
        <title>The full-ORF clone resource of the German cDNA consortium.</title>
        <authorList>
            <person name="Bechtel S."/>
            <person name="Rosenfelder H."/>
            <person name="Duda A."/>
            <person name="Schmidt C.P."/>
            <person name="Ernst U."/>
            <person name="Wellenreuther R."/>
            <person name="Mehrle A."/>
            <person name="Schuster C."/>
            <person name="Bahr A."/>
            <person name="Bloecker H."/>
            <person name="Heubner D."/>
            <person name="Hoerlein A."/>
            <person name="Michel G."/>
            <person name="Wedler H."/>
            <person name="Koehrer K."/>
            <person name="Ottenwaelder B."/>
            <person name="Poustka A."/>
            <person name="Wiemann S."/>
            <person name="Schupp I."/>
        </authorList>
    </citation>
    <scope>NUCLEOTIDE SEQUENCE [LARGE SCALE MRNA] OF 44-568</scope>
    <source>
        <tissue>Brain</tissue>
    </source>
</reference>
<reference key="5">
    <citation type="submission" date="2008-03" db="UniProtKB">
        <authorList>
            <person name="Bienvenut W.V."/>
            <person name="Vousden K.H."/>
            <person name="Lukashchuk N."/>
            <person name="Calvo F."/>
            <person name="Kolch W."/>
        </authorList>
    </citation>
    <scope>PROTEIN SEQUENCE OF 156-165; 191-205; 212-218; 380-401 AND 482-493</scope>
    <scope>IDENTIFICATION BY MASS SPECTROMETRY</scope>
    <source>
        <tissue>Cervix carcinoma</tissue>
        <tissue>Lung carcinoma</tissue>
    </source>
</reference>
<reference key="6">
    <citation type="journal article" date="2008" name="Proc. Natl. Acad. Sci. U.S.A.">
        <title>A quantitative atlas of mitotic phosphorylation.</title>
        <authorList>
            <person name="Dephoure N."/>
            <person name="Zhou C."/>
            <person name="Villen J."/>
            <person name="Beausoleil S.A."/>
            <person name="Bakalarski C.E."/>
            <person name="Elledge S.J."/>
            <person name="Gygi S.P."/>
        </authorList>
    </citation>
    <scope>IDENTIFICATION BY MASS SPECTROMETRY [LARGE SCALE ANALYSIS]</scope>
    <source>
        <tissue>Cervix carcinoma</tissue>
    </source>
</reference>
<reference key="7">
    <citation type="journal article" date="2009" name="Anal. Chem.">
        <title>Lys-N and trypsin cover complementary parts of the phosphoproteome in a refined SCX-based approach.</title>
        <authorList>
            <person name="Gauci S."/>
            <person name="Helbig A.O."/>
            <person name="Slijper M."/>
            <person name="Krijgsveld J."/>
            <person name="Heck A.J."/>
            <person name="Mohammed S."/>
        </authorList>
    </citation>
    <scope>IDENTIFICATION BY MASS SPECTROMETRY [LARGE SCALE ANALYSIS]</scope>
</reference>
<reference key="8">
    <citation type="journal article" date="2009" name="Sci. Signal.">
        <title>Quantitative phosphoproteomic analysis of T cell receptor signaling reveals system-wide modulation of protein-protein interactions.</title>
        <authorList>
            <person name="Mayya V."/>
            <person name="Lundgren D.H."/>
            <person name="Hwang S.-I."/>
            <person name="Rezaul K."/>
            <person name="Wu L."/>
            <person name="Eng J.K."/>
            <person name="Rodionov V."/>
            <person name="Han D.K."/>
        </authorList>
    </citation>
    <scope>PHOSPHORYLATION [LARGE SCALE ANALYSIS] AT SER-21 AND SER-22</scope>
    <scope>IDENTIFICATION BY MASS SPECTROMETRY [LARGE SCALE ANALYSIS]</scope>
    <source>
        <tissue>Leukemic T-cell</tissue>
    </source>
</reference>
<reference key="9">
    <citation type="journal article" date="2010" name="Sci. Signal.">
        <title>Quantitative phosphoproteomics reveals widespread full phosphorylation site occupancy during mitosis.</title>
        <authorList>
            <person name="Olsen J.V."/>
            <person name="Vermeulen M."/>
            <person name="Santamaria A."/>
            <person name="Kumar C."/>
            <person name="Miller M.L."/>
            <person name="Jensen L.J."/>
            <person name="Gnad F."/>
            <person name="Cox J."/>
            <person name="Jensen T.S."/>
            <person name="Nigg E.A."/>
            <person name="Brunak S."/>
            <person name="Mann M."/>
        </authorList>
    </citation>
    <scope>IDENTIFICATION BY MASS SPECTROMETRY [LARGE SCALE ANALYSIS]</scope>
    <source>
        <tissue>Cervix carcinoma</tissue>
    </source>
</reference>
<reference key="10">
    <citation type="journal article" date="2011" name="BMC Syst. Biol.">
        <title>Initial characterization of the human central proteome.</title>
        <authorList>
            <person name="Burkard T.R."/>
            <person name="Planyavsky M."/>
            <person name="Kaupe I."/>
            <person name="Breitwieser F.P."/>
            <person name="Buerckstuemmer T."/>
            <person name="Bennett K.L."/>
            <person name="Superti-Furga G."/>
            <person name="Colinge J."/>
        </authorList>
    </citation>
    <scope>IDENTIFICATION BY MASS SPECTROMETRY [LARGE SCALE ANALYSIS]</scope>
</reference>
<reference key="11">
    <citation type="journal article" date="2011" name="J. Biol. Chem.">
        <title>RioK1, a new interactor of protein arginine methyltransferase 5 (PRMT5), competes with pICln for binding and modulates PRMT5 complex composition and substrate specificity.</title>
        <authorList>
            <person name="Guderian G."/>
            <person name="Peter C."/>
            <person name="Wiesner J."/>
            <person name="Sickmann A."/>
            <person name="Schulze-Osthoff K."/>
            <person name="Fischer U."/>
            <person name="Grimmler M."/>
        </authorList>
    </citation>
    <scope>SUBUNIT</scope>
    <scope>SUBCELLULAR LOCATION</scope>
    <scope>INTERACTION WITH PRMT5 AND NCL</scope>
    <scope>IDENTIFICATION IN A COMPLEX WITH PRTM5; WDR77 AND RIOK1</scope>
    <scope>IDENTIFICATION BY MASS SPECTROMETRY</scope>
    <scope>FUNCTION</scope>
</reference>
<reference key="12">
    <citation type="journal article" date="2011" name="Sci. Signal.">
        <title>System-wide temporal characterization of the proteome and phosphoproteome of human embryonic stem cell differentiation.</title>
        <authorList>
            <person name="Rigbolt K.T."/>
            <person name="Prokhorova T.A."/>
            <person name="Akimov V."/>
            <person name="Henningsen J."/>
            <person name="Johansen P.T."/>
            <person name="Kratchmarova I."/>
            <person name="Kassem M."/>
            <person name="Mann M."/>
            <person name="Olsen J.V."/>
            <person name="Blagoev B."/>
        </authorList>
    </citation>
    <scope>IDENTIFICATION BY MASS SPECTROMETRY [LARGE SCALE ANALYSIS]</scope>
</reference>
<reference key="13">
    <citation type="journal article" date="2012" name="Mol. Biol. Cell">
        <title>The kinase activity of human Rio1 is required for final steps of cytoplasmic maturation of 40S subunits.</title>
        <authorList>
            <person name="Widmann B."/>
            <person name="Wandrey F."/>
            <person name="Badertscher L."/>
            <person name="Wyler E."/>
            <person name="Pfannstiel J."/>
            <person name="Zemp I."/>
            <person name="Kutay U."/>
        </authorList>
    </citation>
    <scope>FUNCTION</scope>
    <scope>INTERACTION WITH PRMT5 AND WDR77</scope>
    <scope>SUBUNIT</scope>
    <scope>ACTIVE SITE</scope>
    <scope>MUTAGENESIS OF ASP-324</scope>
</reference>
<reference key="14">
    <citation type="journal article" date="2013" name="J. Proteome Res.">
        <title>Toward a comprehensive characterization of a human cancer cell phosphoproteome.</title>
        <authorList>
            <person name="Zhou H."/>
            <person name="Di Palma S."/>
            <person name="Preisinger C."/>
            <person name="Peng M."/>
            <person name="Polat A.N."/>
            <person name="Heck A.J."/>
            <person name="Mohammed S."/>
        </authorList>
    </citation>
    <scope>PHOSPHORYLATION [LARGE SCALE ANALYSIS] AT SER-22</scope>
    <scope>IDENTIFICATION BY MASS SPECTROMETRY [LARGE SCALE ANALYSIS]</scope>
    <source>
        <tissue>Cervix carcinoma</tissue>
        <tissue>Erythroleukemia</tissue>
    </source>
</reference>
<reference key="15">
    <citation type="journal article" date="2014" name="Nucleic Acids Res.">
        <title>Dominant Rio1 kinase/ATPase catalytic mutant induces trapping of late pre-40S biogenesis factors in 80S-like ribosomes.</title>
        <authorList>
            <person name="Ferreira-Cerca S."/>
            <person name="Kiburu I."/>
            <person name="Thomson E."/>
            <person name="LaRonde N."/>
            <person name="Hurt E."/>
        </authorList>
    </citation>
    <scope>X-RAY CRYSTALLOGRAPHY (2.70 ANGSTROMS) OF 143-494 IN COMPLEX WITH ADP</scope>
    <scope>COFACTOR</scope>
</reference>
<name>RIOK1_HUMAN</name>
<feature type="chain" id="PRO_0000213526" description="Serine/threonine-protein kinase RIO1">
    <location>
        <begin position="1"/>
        <end position="568"/>
    </location>
</feature>
<feature type="domain" description="Protein kinase">
    <location>
        <begin position="180"/>
        <end position="479"/>
    </location>
</feature>
<feature type="region of interest" description="Disordered" evidence="3">
    <location>
        <begin position="14"/>
        <end position="70"/>
    </location>
</feature>
<feature type="region of interest" description="Disordered" evidence="3">
    <location>
        <begin position="83"/>
        <end position="109"/>
    </location>
</feature>
<feature type="region of interest" description="Disordered" evidence="3">
    <location>
        <begin position="490"/>
        <end position="568"/>
    </location>
</feature>
<feature type="compositionally biased region" description="Basic and acidic residues" evidence="3">
    <location>
        <begin position="24"/>
        <end position="38"/>
    </location>
</feature>
<feature type="compositionally biased region" description="Acidic residues" evidence="3">
    <location>
        <begin position="51"/>
        <end position="70"/>
    </location>
</feature>
<feature type="compositionally biased region" description="Polar residues" evidence="3">
    <location>
        <begin position="87"/>
        <end position="105"/>
    </location>
</feature>
<feature type="compositionally biased region" description="Acidic residues" evidence="3">
    <location>
        <begin position="497"/>
        <end position="513"/>
    </location>
</feature>
<feature type="compositionally biased region" description="Basic and acidic residues" evidence="3">
    <location>
        <begin position="514"/>
        <end position="543"/>
    </location>
</feature>
<feature type="compositionally biased region" description="Basic residues" evidence="3">
    <location>
        <begin position="544"/>
        <end position="568"/>
    </location>
</feature>
<feature type="active site" description="Proton acceptor" evidence="5 8">
    <location>
        <position position="324"/>
    </location>
</feature>
<feature type="active site" description="4-aspartylphosphate intermediate" evidence="6 10">
    <location>
        <position position="341"/>
    </location>
</feature>
<feature type="binding site" evidence="6 10">
    <location>
        <position position="208"/>
    </location>
    <ligand>
        <name>ATP</name>
        <dbReference type="ChEBI" id="CHEBI:30616"/>
    </ligand>
</feature>
<feature type="binding site" evidence="6 10">
    <location>
        <position position="278"/>
    </location>
    <ligand>
        <name>ATP</name>
        <dbReference type="ChEBI" id="CHEBI:30616"/>
    </ligand>
</feature>
<feature type="binding site" evidence="6 10">
    <location>
        <position position="280"/>
    </location>
    <ligand>
        <name>ATP</name>
        <dbReference type="ChEBI" id="CHEBI:30616"/>
    </ligand>
</feature>
<feature type="binding site" evidence="6 10">
    <location>
        <position position="329"/>
    </location>
    <ligand>
        <name>Mg(2+)</name>
        <dbReference type="ChEBI" id="CHEBI:18420"/>
    </ligand>
</feature>
<feature type="binding site" evidence="6 10">
    <location>
        <position position="341"/>
    </location>
    <ligand>
        <name>Mg(2+)</name>
        <dbReference type="ChEBI" id="CHEBI:18420"/>
    </ligand>
</feature>
<feature type="modified residue" description="Phosphoserine" evidence="11">
    <location>
        <position position="21"/>
    </location>
</feature>
<feature type="modified residue" description="Phosphoserine" evidence="11 12">
    <location>
        <position position="22"/>
    </location>
</feature>
<feature type="sequence variant" id="VAR_061777" description="In dbSNP:rs56067778.">
    <original>V</original>
    <variation>I</variation>
    <location>
        <position position="375"/>
    </location>
</feature>
<feature type="mutagenesis site" description="Abolishes autophosphorylation activity; enhances association with pre-40S ribosomal subunits; inhibits processing of 18S-E pre-rRNA to the mature 18S rRNA." evidence="5">
    <original>D</original>
    <variation>A</variation>
    <location>
        <position position="324"/>
    </location>
</feature>
<feature type="turn" evidence="13">
    <location>
        <begin position="13"/>
        <end position="16"/>
    </location>
</feature>
<feature type="strand" evidence="14">
    <location>
        <begin position="109"/>
        <end position="111"/>
    </location>
</feature>
<feature type="helix" evidence="14">
    <location>
        <begin position="112"/>
        <end position="116"/>
    </location>
</feature>
<feature type="helix" evidence="16">
    <location>
        <begin position="131"/>
        <end position="144"/>
    </location>
</feature>
<feature type="helix" evidence="16">
    <location>
        <begin position="152"/>
        <end position="155"/>
    </location>
</feature>
<feature type="strand" evidence="16">
    <location>
        <begin position="158"/>
        <end position="161"/>
    </location>
</feature>
<feature type="helix" evidence="16">
    <location>
        <begin position="164"/>
        <end position="175"/>
    </location>
</feature>
<feature type="strand" evidence="16">
    <location>
        <begin position="180"/>
        <end position="188"/>
    </location>
</feature>
<feature type="strand" evidence="16">
    <location>
        <begin position="190"/>
        <end position="198"/>
    </location>
</feature>
<feature type="strand" evidence="15">
    <location>
        <begin position="200"/>
        <end position="202"/>
    </location>
</feature>
<feature type="strand" evidence="16">
    <location>
        <begin position="204"/>
        <end position="210"/>
    </location>
</feature>
<feature type="strand" evidence="16">
    <location>
        <begin position="223"/>
        <end position="226"/>
    </location>
</feature>
<feature type="helix" evidence="17">
    <location>
        <begin position="228"/>
        <end position="230"/>
    </location>
</feature>
<feature type="strand" evidence="16">
    <location>
        <begin position="231"/>
        <end position="233"/>
    </location>
</feature>
<feature type="helix" evidence="16">
    <location>
        <begin position="239"/>
        <end position="259"/>
    </location>
</feature>
<feature type="strand" evidence="16">
    <location>
        <begin position="267"/>
        <end position="271"/>
    </location>
</feature>
<feature type="strand" evidence="16">
    <location>
        <begin position="274"/>
        <end position="278"/>
    </location>
</feature>
<feature type="strand" evidence="16">
    <location>
        <begin position="281"/>
        <end position="284"/>
    </location>
</feature>
<feature type="helix" evidence="16">
    <location>
        <begin position="290"/>
        <end position="292"/>
    </location>
</feature>
<feature type="helix" evidence="16">
    <location>
        <begin position="297"/>
        <end position="316"/>
    </location>
</feature>
<feature type="strand" evidence="16">
    <location>
        <begin position="329"/>
        <end position="333"/>
    </location>
</feature>
<feature type="strand" evidence="16">
    <location>
        <begin position="336"/>
        <end position="339"/>
    </location>
</feature>
<feature type="strand" evidence="16">
    <location>
        <begin position="346"/>
        <end position="350"/>
    </location>
</feature>
<feature type="helix" evidence="16">
    <location>
        <begin position="353"/>
        <end position="370"/>
    </location>
</feature>
<feature type="helix" evidence="16">
    <location>
        <begin position="378"/>
        <end position="386"/>
    </location>
</feature>
<feature type="strand" evidence="16">
    <location>
        <begin position="392"/>
        <end position="394"/>
    </location>
</feature>
<feature type="helix" evidence="16">
    <location>
        <begin position="395"/>
        <end position="407"/>
    </location>
</feature>
<feature type="helix" evidence="16">
    <location>
        <begin position="413"/>
        <end position="426"/>
    </location>
</feature>
<feature type="helix" evidence="16">
    <location>
        <begin position="439"/>
        <end position="451"/>
    </location>
</feature>
<feature type="helix" evidence="16">
    <location>
        <begin position="532"/>
        <end position="547"/>
    </location>
</feature>
<feature type="helix" evidence="16">
    <location>
        <begin position="552"/>
        <end position="558"/>
    </location>
</feature>
<keyword id="KW-0002">3D-structure</keyword>
<keyword id="KW-0067">ATP-binding</keyword>
<keyword id="KW-0963">Cytoplasm</keyword>
<keyword id="KW-0903">Direct protein sequencing</keyword>
<keyword id="KW-0378">Hydrolase</keyword>
<keyword id="KW-0418">Kinase</keyword>
<keyword id="KW-0460">Magnesium</keyword>
<keyword id="KW-0479">Metal-binding</keyword>
<keyword id="KW-0547">Nucleotide-binding</keyword>
<keyword id="KW-0597">Phosphoprotein</keyword>
<keyword id="KW-1267">Proteomics identification</keyword>
<keyword id="KW-1185">Reference proteome</keyword>
<keyword id="KW-0690">Ribosome biogenesis</keyword>
<keyword id="KW-0723">Serine/threonine-protein kinase</keyword>
<keyword id="KW-0808">Transferase</keyword>
<gene>
    <name evidence="9" type="primary">RIOK1</name>
    <name type="synonym">RIO1</name>
</gene>
<evidence type="ECO:0000250" key="1">
    <source>
        <dbReference type="UniProtKB" id="G0S3J5"/>
    </source>
</evidence>
<evidence type="ECO:0000250" key="2">
    <source>
        <dbReference type="UniProtKB" id="Q12196"/>
    </source>
</evidence>
<evidence type="ECO:0000256" key="3">
    <source>
        <dbReference type="SAM" id="MobiDB-lite"/>
    </source>
</evidence>
<evidence type="ECO:0000269" key="4">
    <source>
    </source>
</evidence>
<evidence type="ECO:0000269" key="5">
    <source>
    </source>
</evidence>
<evidence type="ECO:0000269" key="6">
    <source>
    </source>
</evidence>
<evidence type="ECO:0000305" key="7"/>
<evidence type="ECO:0000305" key="8">
    <source>
    </source>
</evidence>
<evidence type="ECO:0000312" key="9">
    <source>
        <dbReference type="HGNC" id="HGNC:18656"/>
    </source>
</evidence>
<evidence type="ECO:0007744" key="10">
    <source>
        <dbReference type="PDB" id="4OTP"/>
    </source>
</evidence>
<evidence type="ECO:0007744" key="11">
    <source>
    </source>
</evidence>
<evidence type="ECO:0007744" key="12">
    <source>
    </source>
</evidence>
<evidence type="ECO:0007829" key="13">
    <source>
        <dbReference type="PDB" id="6V0N"/>
    </source>
</evidence>
<evidence type="ECO:0007829" key="14">
    <source>
        <dbReference type="PDB" id="6ZXD"/>
    </source>
</evidence>
<evidence type="ECO:0007829" key="15">
    <source>
        <dbReference type="PDB" id="6ZXE"/>
    </source>
</evidence>
<evidence type="ECO:0007829" key="16">
    <source>
        <dbReference type="PDB" id="6ZXG"/>
    </source>
</evidence>
<evidence type="ECO:0007829" key="17">
    <source>
        <dbReference type="PDB" id="6ZXH"/>
    </source>
</evidence>
<proteinExistence type="evidence at protein level"/>
<protein>
    <recommendedName>
        <fullName>Serine/threonine-protein kinase RIO1</fullName>
        <ecNumber evidence="5">2.7.11.1</ecNumber>
        <ecNumber evidence="1">3.6.1.-</ecNumber>
    </recommendedName>
    <alternativeName>
        <fullName>RIO kinase 1</fullName>
    </alternativeName>
</protein>
<dbReference type="EC" id="2.7.11.1" evidence="5"/>
<dbReference type="EC" id="3.6.1.-" evidence="1"/>
<dbReference type="EMBL" id="AK054568">
    <property type="protein sequence ID" value="BAB70761.1"/>
    <property type="molecule type" value="mRNA"/>
</dbReference>
<dbReference type="EMBL" id="AK314467">
    <property type="protein sequence ID" value="BAG37075.1"/>
    <property type="molecule type" value="mRNA"/>
</dbReference>
<dbReference type="EMBL" id="CH471087">
    <property type="protein sequence ID" value="EAW55210.1"/>
    <property type="molecule type" value="Genomic_DNA"/>
</dbReference>
<dbReference type="EMBL" id="BC006104">
    <property type="protein sequence ID" value="AAH06104.2"/>
    <property type="molecule type" value="mRNA"/>
</dbReference>
<dbReference type="EMBL" id="AL834277">
    <property type="protein sequence ID" value="CAD38952.1"/>
    <property type="molecule type" value="mRNA"/>
</dbReference>
<dbReference type="CCDS" id="CCDS4500.1"/>
<dbReference type="RefSeq" id="NP_113668.2">
    <property type="nucleotide sequence ID" value="NM_031480.2"/>
</dbReference>
<dbReference type="PDB" id="4OTP">
    <property type="method" value="X-ray"/>
    <property type="resolution" value="2.70 A"/>
    <property type="chains" value="A=143-494"/>
</dbReference>
<dbReference type="PDB" id="6G5I">
    <property type="method" value="EM"/>
    <property type="resolution" value="3.50 A"/>
    <property type="chains" value="z=1-568"/>
</dbReference>
<dbReference type="PDB" id="6V0N">
    <property type="method" value="X-ray"/>
    <property type="resolution" value="2.11 A"/>
    <property type="chains" value="C=11-23"/>
</dbReference>
<dbReference type="PDB" id="6ZV6">
    <property type="method" value="EM"/>
    <property type="resolution" value="2.90 A"/>
    <property type="chains" value="h=1-568"/>
</dbReference>
<dbReference type="PDB" id="6ZXD">
    <property type="method" value="EM"/>
    <property type="resolution" value="3.20 A"/>
    <property type="chains" value="z=1-568"/>
</dbReference>
<dbReference type="PDB" id="6ZXE">
    <property type="method" value="EM"/>
    <property type="resolution" value="3.00 A"/>
    <property type="chains" value="z=1-568"/>
</dbReference>
<dbReference type="PDB" id="6ZXF">
    <property type="method" value="EM"/>
    <property type="resolution" value="3.70 A"/>
    <property type="chains" value="z=1-568"/>
</dbReference>
<dbReference type="PDB" id="6ZXG">
    <property type="method" value="EM"/>
    <property type="resolution" value="2.60 A"/>
    <property type="chains" value="z=1-568"/>
</dbReference>
<dbReference type="PDB" id="6ZXH">
    <property type="method" value="EM"/>
    <property type="resolution" value="2.70 A"/>
    <property type="chains" value="z=1-568"/>
</dbReference>
<dbReference type="PDB" id="7BOC">
    <property type="method" value="X-ray"/>
    <property type="resolution" value="2.55 A"/>
    <property type="chains" value="B=9-23"/>
</dbReference>
<dbReference type="PDBsum" id="4OTP"/>
<dbReference type="PDBsum" id="6G5I"/>
<dbReference type="PDBsum" id="6V0N"/>
<dbReference type="PDBsum" id="6ZV6"/>
<dbReference type="PDBsum" id="6ZXD"/>
<dbReference type="PDBsum" id="6ZXE"/>
<dbReference type="PDBsum" id="6ZXF"/>
<dbReference type="PDBsum" id="6ZXG"/>
<dbReference type="PDBsum" id="6ZXH"/>
<dbReference type="PDBsum" id="7BOC"/>
<dbReference type="EMDB" id="EMD-11441"/>
<dbReference type="EMDB" id="EMD-11517"/>
<dbReference type="EMDB" id="EMD-11518"/>
<dbReference type="EMDB" id="EMD-11519"/>
<dbReference type="EMDB" id="EMD-11520"/>
<dbReference type="EMDB" id="EMD-11521"/>
<dbReference type="EMDB" id="EMD-4353"/>
<dbReference type="SMR" id="Q9BRS2"/>
<dbReference type="BioGRID" id="123743">
    <property type="interactions" value="570"/>
</dbReference>
<dbReference type="ComplexPortal" id="CPX-8148">
    <property type="entry name" value="PRMT5 methylosome complex, RIOK1 variant"/>
</dbReference>
<dbReference type="FunCoup" id="Q9BRS2">
    <property type="interactions" value="3344"/>
</dbReference>
<dbReference type="IntAct" id="Q9BRS2">
    <property type="interactions" value="83"/>
</dbReference>
<dbReference type="MINT" id="Q9BRS2"/>
<dbReference type="STRING" id="9606.ENSP00000369162"/>
<dbReference type="BindingDB" id="Q9BRS2"/>
<dbReference type="ChEMBL" id="CHEMBL5975"/>
<dbReference type="DrugBank" id="DB12010">
    <property type="generic name" value="Fostamatinib"/>
</dbReference>
<dbReference type="DrugCentral" id="Q9BRS2"/>
<dbReference type="GlyGen" id="Q9BRS2">
    <property type="glycosylation" value="1 site, 1 O-linked glycan (1 site)"/>
</dbReference>
<dbReference type="iPTMnet" id="Q9BRS2"/>
<dbReference type="MetOSite" id="Q9BRS2"/>
<dbReference type="PhosphoSitePlus" id="Q9BRS2"/>
<dbReference type="BioMuta" id="RIOK1"/>
<dbReference type="DMDM" id="56404949"/>
<dbReference type="CPTAC" id="non-CPTAC-5999"/>
<dbReference type="CPTAC" id="non-CPTAC-6000"/>
<dbReference type="jPOST" id="Q9BRS2"/>
<dbReference type="MassIVE" id="Q9BRS2"/>
<dbReference type="PaxDb" id="9606-ENSP00000369162"/>
<dbReference type="PeptideAtlas" id="Q9BRS2"/>
<dbReference type="ProteomicsDB" id="78823"/>
<dbReference type="Pumba" id="Q9BRS2"/>
<dbReference type="Antibodypedia" id="24663">
    <property type="antibodies" value="214 antibodies from 29 providers"/>
</dbReference>
<dbReference type="DNASU" id="83732"/>
<dbReference type="Ensembl" id="ENST00000379834.7">
    <property type="protein sequence ID" value="ENSP00000369162.2"/>
    <property type="gene ID" value="ENSG00000124784.9"/>
</dbReference>
<dbReference type="GeneID" id="83732"/>
<dbReference type="KEGG" id="hsa:83732"/>
<dbReference type="MANE-Select" id="ENST00000379834.7">
    <property type="protein sequence ID" value="ENSP00000369162.2"/>
    <property type="RefSeq nucleotide sequence ID" value="NM_031480.3"/>
    <property type="RefSeq protein sequence ID" value="NP_113668.2"/>
</dbReference>
<dbReference type="UCSC" id="uc003mxn.4">
    <property type="organism name" value="human"/>
</dbReference>
<dbReference type="AGR" id="HGNC:18656"/>
<dbReference type="CTD" id="83732"/>
<dbReference type="DisGeNET" id="83732"/>
<dbReference type="GeneCards" id="RIOK1"/>
<dbReference type="HGNC" id="HGNC:18656">
    <property type="gene designation" value="RIOK1"/>
</dbReference>
<dbReference type="HPA" id="ENSG00000124784">
    <property type="expression patterns" value="Low tissue specificity"/>
</dbReference>
<dbReference type="MIM" id="617753">
    <property type="type" value="gene"/>
</dbReference>
<dbReference type="neXtProt" id="NX_Q9BRS2"/>
<dbReference type="OpenTargets" id="ENSG00000124784"/>
<dbReference type="PharmGKB" id="PA134928236"/>
<dbReference type="VEuPathDB" id="HostDB:ENSG00000124784"/>
<dbReference type="eggNOG" id="KOG2270">
    <property type="taxonomic scope" value="Eukaryota"/>
</dbReference>
<dbReference type="GeneTree" id="ENSGT00940000157075"/>
<dbReference type="HOGENOM" id="CLU_018693_4_3_1"/>
<dbReference type="InParanoid" id="Q9BRS2"/>
<dbReference type="OMA" id="HPMSLDF"/>
<dbReference type="OrthoDB" id="205248at2759"/>
<dbReference type="PAN-GO" id="Q9BRS2">
    <property type="GO annotations" value="4 GO annotations based on evolutionary models"/>
</dbReference>
<dbReference type="PhylomeDB" id="Q9BRS2"/>
<dbReference type="TreeFam" id="TF105831"/>
<dbReference type="PathwayCommons" id="Q9BRS2"/>
<dbReference type="Reactome" id="R-HSA-6791226">
    <property type="pathway name" value="Major pathway of rRNA processing in the nucleolus and cytosol"/>
</dbReference>
<dbReference type="SignaLink" id="Q9BRS2"/>
<dbReference type="SIGNOR" id="Q9BRS2"/>
<dbReference type="BioGRID-ORCS" id="83732">
    <property type="hits" value="812 hits in 1192 CRISPR screens"/>
</dbReference>
<dbReference type="ChiTaRS" id="RIOK1">
    <property type="organism name" value="human"/>
</dbReference>
<dbReference type="EvolutionaryTrace" id="Q9BRS2"/>
<dbReference type="GenomeRNAi" id="83732"/>
<dbReference type="Pharos" id="Q9BRS2">
    <property type="development level" value="Tchem"/>
</dbReference>
<dbReference type="PRO" id="PR:Q9BRS2"/>
<dbReference type="Proteomes" id="UP000005640">
    <property type="component" value="Chromosome 6"/>
</dbReference>
<dbReference type="RNAct" id="Q9BRS2">
    <property type="molecule type" value="protein"/>
</dbReference>
<dbReference type="Bgee" id="ENSG00000124784">
    <property type="expression patterns" value="Expressed in epithelial cell of pancreas and 165 other cell types or tissues"/>
</dbReference>
<dbReference type="ExpressionAtlas" id="Q9BRS2">
    <property type="expression patterns" value="baseline and differential"/>
</dbReference>
<dbReference type="GO" id="GO:0005829">
    <property type="term" value="C:cytosol"/>
    <property type="evidence" value="ECO:0000314"/>
    <property type="project" value="UniProtKB"/>
</dbReference>
<dbReference type="GO" id="GO:0034708">
    <property type="term" value="C:methyltransferase complex"/>
    <property type="evidence" value="ECO:0000315"/>
    <property type="project" value="UniProtKB"/>
</dbReference>
<dbReference type="GO" id="GO:0005654">
    <property type="term" value="C:nucleoplasm"/>
    <property type="evidence" value="ECO:0000304"/>
    <property type="project" value="Reactome"/>
</dbReference>
<dbReference type="GO" id="GO:0030688">
    <property type="term" value="C:preribosome, small subunit precursor"/>
    <property type="evidence" value="ECO:0000314"/>
    <property type="project" value="UniProtKB"/>
</dbReference>
<dbReference type="GO" id="GO:0005524">
    <property type="term" value="F:ATP binding"/>
    <property type="evidence" value="ECO:0007669"/>
    <property type="project" value="UniProtKB-KW"/>
</dbReference>
<dbReference type="GO" id="GO:0016787">
    <property type="term" value="F:hydrolase activity"/>
    <property type="evidence" value="ECO:0007669"/>
    <property type="project" value="UniProtKB-KW"/>
</dbReference>
<dbReference type="GO" id="GO:0046872">
    <property type="term" value="F:metal ion binding"/>
    <property type="evidence" value="ECO:0007669"/>
    <property type="project" value="UniProtKB-KW"/>
</dbReference>
<dbReference type="GO" id="GO:0106310">
    <property type="term" value="F:protein serine kinase activity"/>
    <property type="evidence" value="ECO:0007669"/>
    <property type="project" value="RHEA"/>
</dbReference>
<dbReference type="GO" id="GO:0004674">
    <property type="term" value="F:protein serine/threonine kinase activity"/>
    <property type="evidence" value="ECO:0000318"/>
    <property type="project" value="GO_Central"/>
</dbReference>
<dbReference type="GO" id="GO:0030490">
    <property type="term" value="P:maturation of SSU-rRNA"/>
    <property type="evidence" value="ECO:0000315"/>
    <property type="project" value="UniProtKB"/>
</dbReference>
<dbReference type="GO" id="GO:2000234">
    <property type="term" value="P:positive regulation of rRNA processing"/>
    <property type="evidence" value="ECO:0000315"/>
    <property type="project" value="UniProtKB"/>
</dbReference>
<dbReference type="GO" id="GO:0042274">
    <property type="term" value="P:ribosomal small subunit biogenesis"/>
    <property type="evidence" value="ECO:0000315"/>
    <property type="project" value="UniProtKB"/>
</dbReference>
<dbReference type="CDD" id="cd05147">
    <property type="entry name" value="RIO1_euk"/>
    <property type="match status" value="1"/>
</dbReference>
<dbReference type="FunFam" id="1.10.510.10:FF:000232">
    <property type="entry name" value="Serine/threonine-protein kinase RIO1"/>
    <property type="match status" value="1"/>
</dbReference>
<dbReference type="FunFam" id="3.30.200.20:FF:000148">
    <property type="entry name" value="Serine/threonine-protein kinase RIO1"/>
    <property type="match status" value="1"/>
</dbReference>
<dbReference type="Gene3D" id="3.30.200.20">
    <property type="entry name" value="Phosphorylase Kinase, domain 1"/>
    <property type="match status" value="1"/>
</dbReference>
<dbReference type="Gene3D" id="1.10.510.10">
    <property type="entry name" value="Transferase(Phosphotransferase) domain 1"/>
    <property type="match status" value="1"/>
</dbReference>
<dbReference type="InterPro" id="IPR011009">
    <property type="entry name" value="Kinase-like_dom_sf"/>
</dbReference>
<dbReference type="InterPro" id="IPR051272">
    <property type="entry name" value="RIO-type_Ser/Thr_kinase"/>
</dbReference>
<dbReference type="InterPro" id="IPR018934">
    <property type="entry name" value="RIO_dom"/>
</dbReference>
<dbReference type="InterPro" id="IPR000687">
    <property type="entry name" value="RIO_kinase"/>
</dbReference>
<dbReference type="InterPro" id="IPR018935">
    <property type="entry name" value="RIO_kinase_CS"/>
</dbReference>
<dbReference type="InterPro" id="IPR017407">
    <property type="entry name" value="Ser/Thr_kinase_Rio1"/>
</dbReference>
<dbReference type="PANTHER" id="PTHR45723">
    <property type="entry name" value="SERINE/THREONINE-PROTEIN KINASE RIO1"/>
    <property type="match status" value="1"/>
</dbReference>
<dbReference type="Pfam" id="PF01163">
    <property type="entry name" value="RIO1"/>
    <property type="match status" value="1"/>
</dbReference>
<dbReference type="PIRSF" id="PIRSF038147">
    <property type="entry name" value="Ser/Thr_PK_RIO1"/>
    <property type="match status" value="1"/>
</dbReference>
<dbReference type="SMART" id="SM00090">
    <property type="entry name" value="RIO"/>
    <property type="match status" value="1"/>
</dbReference>
<dbReference type="SUPFAM" id="SSF56112">
    <property type="entry name" value="Protein kinase-like (PK-like)"/>
    <property type="match status" value="1"/>
</dbReference>
<dbReference type="PROSITE" id="PS01245">
    <property type="entry name" value="RIO1"/>
    <property type="match status" value="1"/>
</dbReference>
<accession>Q9BRS2</accession>
<accession>B2RB28</accession>
<accession>Q8NDC8</accession>
<accession>Q96NV9</accession>
<organism>
    <name type="scientific">Homo sapiens</name>
    <name type="common">Human</name>
    <dbReference type="NCBI Taxonomy" id="9606"/>
    <lineage>
        <taxon>Eukaryota</taxon>
        <taxon>Metazoa</taxon>
        <taxon>Chordata</taxon>
        <taxon>Craniata</taxon>
        <taxon>Vertebrata</taxon>
        <taxon>Euteleostomi</taxon>
        <taxon>Mammalia</taxon>
        <taxon>Eutheria</taxon>
        <taxon>Euarchontoglires</taxon>
        <taxon>Primates</taxon>
        <taxon>Haplorrhini</taxon>
        <taxon>Catarrhini</taxon>
        <taxon>Hominidae</taxon>
        <taxon>Homo</taxon>
    </lineage>
</organism>